<gene>
    <name evidence="1" type="primary">hslV</name>
    <name type="ordered locus">Cvib_0960</name>
</gene>
<accession>A4SER5</accession>
<dbReference type="EC" id="3.4.25.2" evidence="1"/>
<dbReference type="EMBL" id="CP000607">
    <property type="protein sequence ID" value="ABP36974.1"/>
    <property type="molecule type" value="Genomic_DNA"/>
</dbReference>
<dbReference type="SMR" id="A4SER5"/>
<dbReference type="STRING" id="290318.Cvib_0960"/>
<dbReference type="KEGG" id="pvi:Cvib_0960"/>
<dbReference type="eggNOG" id="COG5405">
    <property type="taxonomic scope" value="Bacteria"/>
</dbReference>
<dbReference type="HOGENOM" id="CLU_093872_1_0_10"/>
<dbReference type="OrthoDB" id="9804884at2"/>
<dbReference type="GO" id="GO:0009376">
    <property type="term" value="C:HslUV protease complex"/>
    <property type="evidence" value="ECO:0007669"/>
    <property type="project" value="UniProtKB-UniRule"/>
</dbReference>
<dbReference type="GO" id="GO:0005839">
    <property type="term" value="C:proteasome core complex"/>
    <property type="evidence" value="ECO:0007669"/>
    <property type="project" value="InterPro"/>
</dbReference>
<dbReference type="GO" id="GO:0046872">
    <property type="term" value="F:metal ion binding"/>
    <property type="evidence" value="ECO:0007669"/>
    <property type="project" value="UniProtKB-KW"/>
</dbReference>
<dbReference type="GO" id="GO:0004298">
    <property type="term" value="F:threonine-type endopeptidase activity"/>
    <property type="evidence" value="ECO:0007669"/>
    <property type="project" value="UniProtKB-KW"/>
</dbReference>
<dbReference type="GO" id="GO:0051603">
    <property type="term" value="P:proteolysis involved in protein catabolic process"/>
    <property type="evidence" value="ECO:0007669"/>
    <property type="project" value="InterPro"/>
</dbReference>
<dbReference type="CDD" id="cd01913">
    <property type="entry name" value="protease_HslV"/>
    <property type="match status" value="1"/>
</dbReference>
<dbReference type="Gene3D" id="3.60.20.10">
    <property type="entry name" value="Glutamine Phosphoribosylpyrophosphate, subunit 1, domain 1"/>
    <property type="match status" value="1"/>
</dbReference>
<dbReference type="HAMAP" id="MF_00248">
    <property type="entry name" value="HslV"/>
    <property type="match status" value="1"/>
</dbReference>
<dbReference type="InterPro" id="IPR022281">
    <property type="entry name" value="ATP-dep_Prtase_HsIV_su"/>
</dbReference>
<dbReference type="InterPro" id="IPR029055">
    <property type="entry name" value="Ntn_hydrolases_N"/>
</dbReference>
<dbReference type="InterPro" id="IPR001353">
    <property type="entry name" value="Proteasome_sua/b"/>
</dbReference>
<dbReference type="InterPro" id="IPR023333">
    <property type="entry name" value="Proteasome_suB-type"/>
</dbReference>
<dbReference type="NCBIfam" id="TIGR03692">
    <property type="entry name" value="ATP_dep_HslV"/>
    <property type="match status" value="1"/>
</dbReference>
<dbReference type="NCBIfam" id="NF003964">
    <property type="entry name" value="PRK05456.1"/>
    <property type="match status" value="1"/>
</dbReference>
<dbReference type="PANTHER" id="PTHR32194:SF0">
    <property type="entry name" value="ATP-DEPENDENT PROTEASE SUBUNIT HSLV"/>
    <property type="match status" value="1"/>
</dbReference>
<dbReference type="PANTHER" id="PTHR32194">
    <property type="entry name" value="METALLOPROTEASE TLDD"/>
    <property type="match status" value="1"/>
</dbReference>
<dbReference type="Pfam" id="PF00227">
    <property type="entry name" value="Proteasome"/>
    <property type="match status" value="1"/>
</dbReference>
<dbReference type="PIRSF" id="PIRSF039093">
    <property type="entry name" value="HslV"/>
    <property type="match status" value="1"/>
</dbReference>
<dbReference type="SUPFAM" id="SSF56235">
    <property type="entry name" value="N-terminal nucleophile aminohydrolases (Ntn hydrolases)"/>
    <property type="match status" value="1"/>
</dbReference>
<dbReference type="PROSITE" id="PS51476">
    <property type="entry name" value="PROTEASOME_BETA_2"/>
    <property type="match status" value="1"/>
</dbReference>
<reference key="1">
    <citation type="submission" date="2007-03" db="EMBL/GenBank/DDBJ databases">
        <title>Complete sequence of Prosthecochloris vibrioformis DSM 265.</title>
        <authorList>
            <consortium name="US DOE Joint Genome Institute"/>
            <person name="Copeland A."/>
            <person name="Lucas S."/>
            <person name="Lapidus A."/>
            <person name="Barry K."/>
            <person name="Detter J.C."/>
            <person name="Glavina del Rio T."/>
            <person name="Hammon N."/>
            <person name="Israni S."/>
            <person name="Pitluck S."/>
            <person name="Schmutz J."/>
            <person name="Larimer F."/>
            <person name="Land M."/>
            <person name="Hauser L."/>
            <person name="Mikhailova N."/>
            <person name="Li T."/>
            <person name="Overmann J."/>
            <person name="Schuster S.C."/>
            <person name="Bryant D.A."/>
            <person name="Richardson P."/>
        </authorList>
    </citation>
    <scope>NUCLEOTIDE SEQUENCE [LARGE SCALE GENOMIC DNA]</scope>
    <source>
        <strain>DSM 265 / 1930</strain>
    </source>
</reference>
<sequence length="182" mass="19741">MKHSEESRIRSTTVIGVLRDGKAALGSDGQMTLGNTVVKHSTRKIRSLYQGRLLAGFAGATADALTLLDRFEEKLEAYNGKLERAAVELARDWRTDKYLRRLEAMLAIVSSEKALIISGTGDVIEPEDGIVAIGSGSMYALAAARALMKHTGLHAGEIVQESLRTAADICIYTNDHIVVEEV</sequence>
<feature type="chain" id="PRO_0000336787" description="ATP-dependent protease subunit HslV">
    <location>
        <begin position="1"/>
        <end position="182"/>
    </location>
</feature>
<feature type="active site" evidence="1">
    <location>
        <position position="12"/>
    </location>
</feature>
<feature type="binding site" evidence="1">
    <location>
        <position position="167"/>
    </location>
    <ligand>
        <name>Na(+)</name>
        <dbReference type="ChEBI" id="CHEBI:29101"/>
    </ligand>
</feature>
<feature type="binding site" evidence="1">
    <location>
        <position position="170"/>
    </location>
    <ligand>
        <name>Na(+)</name>
        <dbReference type="ChEBI" id="CHEBI:29101"/>
    </ligand>
</feature>
<feature type="binding site" evidence="1">
    <location>
        <position position="173"/>
    </location>
    <ligand>
        <name>Na(+)</name>
        <dbReference type="ChEBI" id="CHEBI:29101"/>
    </ligand>
</feature>
<proteinExistence type="inferred from homology"/>
<keyword id="KW-0021">Allosteric enzyme</keyword>
<keyword id="KW-0963">Cytoplasm</keyword>
<keyword id="KW-0378">Hydrolase</keyword>
<keyword id="KW-0479">Metal-binding</keyword>
<keyword id="KW-0645">Protease</keyword>
<keyword id="KW-0915">Sodium</keyword>
<keyword id="KW-0888">Threonine protease</keyword>
<protein>
    <recommendedName>
        <fullName evidence="1">ATP-dependent protease subunit HslV</fullName>
        <ecNumber evidence="1">3.4.25.2</ecNumber>
    </recommendedName>
</protein>
<comment type="function">
    <text evidence="1">Protease subunit of a proteasome-like degradation complex believed to be a general protein degrading machinery.</text>
</comment>
<comment type="catalytic activity">
    <reaction evidence="1">
        <text>ATP-dependent cleavage of peptide bonds with broad specificity.</text>
        <dbReference type="EC" id="3.4.25.2"/>
    </reaction>
</comment>
<comment type="activity regulation">
    <text evidence="1">Allosterically activated by HslU binding.</text>
</comment>
<comment type="subunit">
    <text evidence="1">A double ring-shaped homohexamer of HslV is capped on each side by a ring-shaped HslU homohexamer. The assembly of the HslU/HslV complex is dependent on binding of ATP.</text>
</comment>
<comment type="subcellular location">
    <subcellularLocation>
        <location evidence="1">Cytoplasm</location>
    </subcellularLocation>
</comment>
<comment type="similarity">
    <text evidence="1">Belongs to the peptidase T1B family. HslV subfamily.</text>
</comment>
<organism>
    <name type="scientific">Chlorobium phaeovibrioides (strain DSM 265 / 1930)</name>
    <name type="common">Prosthecochloris vibrioformis (strain DSM 265)</name>
    <dbReference type="NCBI Taxonomy" id="290318"/>
    <lineage>
        <taxon>Bacteria</taxon>
        <taxon>Pseudomonadati</taxon>
        <taxon>Chlorobiota</taxon>
        <taxon>Chlorobiia</taxon>
        <taxon>Chlorobiales</taxon>
        <taxon>Chlorobiaceae</taxon>
        <taxon>Chlorobium/Pelodictyon group</taxon>
        <taxon>Chlorobium</taxon>
    </lineage>
</organism>
<evidence type="ECO:0000255" key="1">
    <source>
        <dbReference type="HAMAP-Rule" id="MF_00248"/>
    </source>
</evidence>
<name>HSLV_CHLPM</name>